<feature type="peptide" id="PRO_0000421208" description="Cupiennin-3a" evidence="1">
    <location>
        <begin position="1"/>
        <end position="27"/>
    </location>
</feature>
<feature type="modified residue" description="Glutamic acid 1-amide" evidence="1">
    <location>
        <position position="27"/>
    </location>
</feature>
<proteinExistence type="evidence at protein level"/>
<accession>B3EWV1</accession>
<evidence type="ECO:0000269" key="1">
    <source>
    </source>
</evidence>
<evidence type="ECO:0000303" key="2">
    <source>
    </source>
</evidence>
<evidence type="ECO:0000303" key="3">
    <source ref="2"/>
</evidence>
<evidence type="ECO:0000305" key="4"/>
<evidence type="ECO:0000305" key="5">
    <source>
    </source>
</evidence>
<organism>
    <name type="scientific">Cupiennius salei</name>
    <name type="common">American wandering spider</name>
    <dbReference type="NCBI Taxonomy" id="6928"/>
    <lineage>
        <taxon>Eukaryota</taxon>
        <taxon>Metazoa</taxon>
        <taxon>Ecdysozoa</taxon>
        <taxon>Arthropoda</taxon>
        <taxon>Chelicerata</taxon>
        <taxon>Arachnida</taxon>
        <taxon>Araneae</taxon>
        <taxon>Araneomorphae</taxon>
        <taxon>Entelegynae</taxon>
        <taxon>Lycosoidea</taxon>
        <taxon>Ctenidae</taxon>
        <taxon>Cupiennius</taxon>
    </lineage>
</organism>
<dbReference type="GO" id="GO:0005576">
    <property type="term" value="C:extracellular region"/>
    <property type="evidence" value="ECO:0007669"/>
    <property type="project" value="UniProtKB-SubCell"/>
</dbReference>
<dbReference type="GO" id="GO:0090729">
    <property type="term" value="F:toxin activity"/>
    <property type="evidence" value="ECO:0007669"/>
    <property type="project" value="UniProtKB-KW"/>
</dbReference>
<dbReference type="GO" id="GO:0042742">
    <property type="term" value="P:defense response to bacterium"/>
    <property type="evidence" value="ECO:0007669"/>
    <property type="project" value="InterPro"/>
</dbReference>
<dbReference type="InterPro" id="IPR035164">
    <property type="entry name" value="Cupiennin"/>
</dbReference>
<dbReference type="Pfam" id="PF17563">
    <property type="entry name" value="Cu"/>
    <property type="match status" value="1"/>
</dbReference>
<keyword id="KW-0027">Amidation</keyword>
<keyword id="KW-0903">Direct protein sequencing</keyword>
<keyword id="KW-0964">Secreted</keyword>
<keyword id="KW-0800">Toxin</keyword>
<sequence>GFGSLFKFLGKKLLKTVAKQAAKKQME</sequence>
<reference key="1">
    <citation type="journal article" date="2012" name="FEBS J.">
        <title>Multicomponent venom of the spider Cupiennius salei: a bioanalytical investigation applying different strategies.</title>
        <authorList>
            <person name="Trachsel C."/>
            <person name="Siegemund D."/>
            <person name="Kampfer U."/>
            <person name="Kopp L.S."/>
            <person name="Buhr C."/>
            <person name="Grossmann J."/>
            <person name="Luthi C."/>
            <person name="Cunningham M."/>
            <person name="Nentwig W."/>
            <person name="Kuhn-Nentwig L."/>
            <person name="Schurch S."/>
            <person name="Schaller J."/>
        </authorList>
    </citation>
    <scope>PROTEIN SEQUENCE</scope>
    <scope>MASS SPECTROMETRY</scope>
    <scope>AMIDATION AT GLU-27</scope>
    <source>
        <tissue>Venom</tissue>
    </source>
</reference>
<reference key="2">
    <citation type="unpublished observations" date="2015-06">
        <authorList>
            <person name="Kuhn-Nentwig L."/>
            <person name="Gohel T."/>
        </authorList>
    </citation>
    <scope>NOMENCLATURE</scope>
</reference>
<comment type="subcellular location">
    <subcellularLocation>
        <location evidence="1">Secreted</location>
    </subcellularLocation>
</comment>
<comment type="tissue specificity">
    <text evidence="5">Expressed by the venom gland.</text>
</comment>
<comment type="mass spectrometry"/>
<comment type="similarity">
    <text evidence="4">Belongs to the cationic peptide 04 (cupiennin) family. 03 subfamily.</text>
</comment>
<name>TXC3A_CUPSA</name>
<protein>
    <recommendedName>
        <fullName evidence="3">Cupiennin-3a</fullName>
        <shortName evidence="3">Cu-3a</shortName>
    </recommendedName>
    <alternativeName>
        <fullName evidence="2">Short cationic peptide-3a</fullName>
        <shortName evidence="2">SCP-3a</shortName>
    </alternativeName>
</protein>